<keyword id="KW-0272">Extracellular matrix</keyword>
<keyword id="KW-1185">Reference proteome</keyword>
<keyword id="KW-0964">Secreted</keyword>
<keyword id="KW-0732">Signal</keyword>
<sequence length="272" mass="29988">MAVPPLFFLLTLLSLPSLLISAGASNAYPSIPGTAPIDGGFTDELKPIRREVYGNGKIYDISHRYTPEMPSWDSSEGIGRFLWLAASMKNGSLANNSEMKIPTHTGTHVDSPGHVYDKYYDAGFDVDSLDLQVLNGLALLVDVPKDKNITAEVMKSLHIPKGVSRVLFRTLNTDRRLMFKKEFDTSYVGFMKDGAQWLVDNTDIKLVGIDYLSVAAYDDLIPSHLVFLKDRETILVEGLKLDGVKAGLYSVHCLPLRLVGAEGSPIRCILID</sequence>
<reference key="1">
    <citation type="journal article" date="1999" name="Nature">
        <title>Sequence and analysis of chromosome 4 of the plant Arabidopsis thaliana.</title>
        <authorList>
            <person name="Mayer K.F.X."/>
            <person name="Schueller C."/>
            <person name="Wambutt R."/>
            <person name="Murphy G."/>
            <person name="Volckaert G."/>
            <person name="Pohl T."/>
            <person name="Duesterhoeft A."/>
            <person name="Stiekema W."/>
            <person name="Entian K.-D."/>
            <person name="Terryn N."/>
            <person name="Harris B."/>
            <person name="Ansorge W."/>
            <person name="Brandt P."/>
            <person name="Grivell L.A."/>
            <person name="Rieger M."/>
            <person name="Weichselgartner M."/>
            <person name="de Simone V."/>
            <person name="Obermaier B."/>
            <person name="Mache R."/>
            <person name="Mueller M."/>
            <person name="Kreis M."/>
            <person name="Delseny M."/>
            <person name="Puigdomenech P."/>
            <person name="Watson M."/>
            <person name="Schmidtheini T."/>
            <person name="Reichert B."/>
            <person name="Portetelle D."/>
            <person name="Perez-Alonso M."/>
            <person name="Boutry M."/>
            <person name="Bancroft I."/>
            <person name="Vos P."/>
            <person name="Hoheisel J."/>
            <person name="Zimmermann W."/>
            <person name="Wedler H."/>
            <person name="Ridley P."/>
            <person name="Langham S.-A."/>
            <person name="McCullagh B."/>
            <person name="Bilham L."/>
            <person name="Robben J."/>
            <person name="van der Schueren J."/>
            <person name="Grymonprez B."/>
            <person name="Chuang Y.-J."/>
            <person name="Vandenbussche F."/>
            <person name="Braeken M."/>
            <person name="Weltjens I."/>
            <person name="Voet M."/>
            <person name="Bastiaens I."/>
            <person name="Aert R."/>
            <person name="Defoor E."/>
            <person name="Weitzenegger T."/>
            <person name="Bothe G."/>
            <person name="Ramsperger U."/>
            <person name="Hilbert H."/>
            <person name="Braun M."/>
            <person name="Holzer E."/>
            <person name="Brandt A."/>
            <person name="Peters S."/>
            <person name="van Staveren M."/>
            <person name="Dirkse W."/>
            <person name="Mooijman P."/>
            <person name="Klein Lankhorst R."/>
            <person name="Rose M."/>
            <person name="Hauf J."/>
            <person name="Koetter P."/>
            <person name="Berneiser S."/>
            <person name="Hempel S."/>
            <person name="Feldpausch M."/>
            <person name="Lamberth S."/>
            <person name="Van den Daele H."/>
            <person name="De Keyser A."/>
            <person name="Buysshaert C."/>
            <person name="Gielen J."/>
            <person name="Villarroel R."/>
            <person name="De Clercq R."/>
            <person name="van Montagu M."/>
            <person name="Rogers J."/>
            <person name="Cronin A."/>
            <person name="Quail M.A."/>
            <person name="Bray-Allen S."/>
            <person name="Clark L."/>
            <person name="Doggett J."/>
            <person name="Hall S."/>
            <person name="Kay M."/>
            <person name="Lennard N."/>
            <person name="McLay K."/>
            <person name="Mayes R."/>
            <person name="Pettett A."/>
            <person name="Rajandream M.A."/>
            <person name="Lyne M."/>
            <person name="Benes V."/>
            <person name="Rechmann S."/>
            <person name="Borkova D."/>
            <person name="Bloecker H."/>
            <person name="Scharfe M."/>
            <person name="Grimm M."/>
            <person name="Loehnert T.-H."/>
            <person name="Dose S."/>
            <person name="de Haan M."/>
            <person name="Maarse A.C."/>
            <person name="Schaefer M."/>
            <person name="Mueller-Auer S."/>
            <person name="Gabel C."/>
            <person name="Fuchs M."/>
            <person name="Fartmann B."/>
            <person name="Granderath K."/>
            <person name="Dauner D."/>
            <person name="Herzl A."/>
            <person name="Neumann S."/>
            <person name="Argiriou A."/>
            <person name="Vitale D."/>
            <person name="Liguori R."/>
            <person name="Piravandi E."/>
            <person name="Massenet O."/>
            <person name="Quigley F."/>
            <person name="Clabauld G."/>
            <person name="Muendlein A."/>
            <person name="Felber R."/>
            <person name="Schnabl S."/>
            <person name="Hiller R."/>
            <person name="Schmidt W."/>
            <person name="Lecharny A."/>
            <person name="Aubourg S."/>
            <person name="Chefdor F."/>
            <person name="Cooke R."/>
            <person name="Berger C."/>
            <person name="Monfort A."/>
            <person name="Casacuberta E."/>
            <person name="Gibbons T."/>
            <person name="Weber N."/>
            <person name="Vandenbol M."/>
            <person name="Bargues M."/>
            <person name="Terol J."/>
            <person name="Torres A."/>
            <person name="Perez-Perez A."/>
            <person name="Purnelle B."/>
            <person name="Bent E."/>
            <person name="Johnson S."/>
            <person name="Tacon D."/>
            <person name="Jesse T."/>
            <person name="Heijnen L."/>
            <person name="Schwarz S."/>
            <person name="Scholler P."/>
            <person name="Heber S."/>
            <person name="Francs P."/>
            <person name="Bielke C."/>
            <person name="Frishman D."/>
            <person name="Haase D."/>
            <person name="Lemcke K."/>
            <person name="Mewes H.-W."/>
            <person name="Stocker S."/>
            <person name="Zaccaria P."/>
            <person name="Bevan M."/>
            <person name="Wilson R.K."/>
            <person name="de la Bastide M."/>
            <person name="Habermann K."/>
            <person name="Parnell L."/>
            <person name="Dedhia N."/>
            <person name="Gnoj L."/>
            <person name="Schutz K."/>
            <person name="Huang E."/>
            <person name="Spiegel L."/>
            <person name="Sekhon M."/>
            <person name="Murray J."/>
            <person name="Sheet P."/>
            <person name="Cordes M."/>
            <person name="Abu-Threideh J."/>
            <person name="Stoneking T."/>
            <person name="Kalicki J."/>
            <person name="Graves T."/>
            <person name="Harmon G."/>
            <person name="Edwards J."/>
            <person name="Latreille P."/>
            <person name="Courtney L."/>
            <person name="Cloud J."/>
            <person name="Abbott A."/>
            <person name="Scott K."/>
            <person name="Johnson D."/>
            <person name="Minx P."/>
            <person name="Bentley D."/>
            <person name="Fulton B."/>
            <person name="Miller N."/>
            <person name="Greco T."/>
            <person name="Kemp K."/>
            <person name="Kramer J."/>
            <person name="Fulton L."/>
            <person name="Mardis E."/>
            <person name="Dante M."/>
            <person name="Pepin K."/>
            <person name="Hillier L.W."/>
            <person name="Nelson J."/>
            <person name="Spieth J."/>
            <person name="Ryan E."/>
            <person name="Andrews S."/>
            <person name="Geisel C."/>
            <person name="Layman D."/>
            <person name="Du H."/>
            <person name="Ali J."/>
            <person name="Berghoff A."/>
            <person name="Jones K."/>
            <person name="Drone K."/>
            <person name="Cotton M."/>
            <person name="Joshu C."/>
            <person name="Antonoiu B."/>
            <person name="Zidanic M."/>
            <person name="Strong C."/>
            <person name="Sun H."/>
            <person name="Lamar B."/>
            <person name="Yordan C."/>
            <person name="Ma P."/>
            <person name="Zhong J."/>
            <person name="Preston R."/>
            <person name="Vil D."/>
            <person name="Shekher M."/>
            <person name="Matero A."/>
            <person name="Shah R."/>
            <person name="Swaby I.K."/>
            <person name="O'Shaughnessy A."/>
            <person name="Rodriguez M."/>
            <person name="Hoffman J."/>
            <person name="Till S."/>
            <person name="Granat S."/>
            <person name="Shohdy N."/>
            <person name="Hasegawa A."/>
            <person name="Hameed A."/>
            <person name="Lodhi M."/>
            <person name="Johnson A."/>
            <person name="Chen E."/>
            <person name="Marra M.A."/>
            <person name="Martienssen R."/>
            <person name="McCombie W.R."/>
        </authorList>
    </citation>
    <scope>NUCLEOTIDE SEQUENCE [LARGE SCALE GENOMIC DNA]</scope>
    <source>
        <strain>cv. Columbia</strain>
    </source>
</reference>
<reference key="2">
    <citation type="journal article" date="2017" name="Plant J.">
        <title>Araport11: a complete reannotation of the Arabidopsis thaliana reference genome.</title>
        <authorList>
            <person name="Cheng C.Y."/>
            <person name="Krishnakumar V."/>
            <person name="Chan A.P."/>
            <person name="Thibaud-Nissen F."/>
            <person name="Schobel S."/>
            <person name="Town C.D."/>
        </authorList>
    </citation>
    <scope>GENOME REANNOTATION</scope>
    <source>
        <strain>cv. Columbia</strain>
    </source>
</reference>
<reference key="3">
    <citation type="journal article" date="2003" name="Science">
        <title>Empirical analysis of transcriptional activity in the Arabidopsis genome.</title>
        <authorList>
            <person name="Yamada K."/>
            <person name="Lim J."/>
            <person name="Dale J.M."/>
            <person name="Chen H."/>
            <person name="Shinn P."/>
            <person name="Palm C.J."/>
            <person name="Southwick A.M."/>
            <person name="Wu H.C."/>
            <person name="Kim C.J."/>
            <person name="Nguyen M."/>
            <person name="Pham P.K."/>
            <person name="Cheuk R.F."/>
            <person name="Karlin-Newmann G."/>
            <person name="Liu S.X."/>
            <person name="Lam B."/>
            <person name="Sakano H."/>
            <person name="Wu T."/>
            <person name="Yu G."/>
            <person name="Miranda M."/>
            <person name="Quach H.L."/>
            <person name="Tripp M."/>
            <person name="Chang C.H."/>
            <person name="Lee J.M."/>
            <person name="Toriumi M.J."/>
            <person name="Chan M.M."/>
            <person name="Tang C.C."/>
            <person name="Onodera C.S."/>
            <person name="Deng J.M."/>
            <person name="Akiyama K."/>
            <person name="Ansari Y."/>
            <person name="Arakawa T."/>
            <person name="Banh J."/>
            <person name="Banno F."/>
            <person name="Bowser L."/>
            <person name="Brooks S.Y."/>
            <person name="Carninci P."/>
            <person name="Chao Q."/>
            <person name="Choy N."/>
            <person name="Enju A."/>
            <person name="Goldsmith A.D."/>
            <person name="Gurjal M."/>
            <person name="Hansen N.F."/>
            <person name="Hayashizaki Y."/>
            <person name="Johnson-Hopson C."/>
            <person name="Hsuan V.W."/>
            <person name="Iida K."/>
            <person name="Karnes M."/>
            <person name="Khan S."/>
            <person name="Koesema E."/>
            <person name="Ishida J."/>
            <person name="Jiang P.X."/>
            <person name="Jones T."/>
            <person name="Kawai J."/>
            <person name="Kamiya A."/>
            <person name="Meyers C."/>
            <person name="Nakajima M."/>
            <person name="Narusaka M."/>
            <person name="Seki M."/>
            <person name="Sakurai T."/>
            <person name="Satou M."/>
            <person name="Tamse R."/>
            <person name="Vaysberg M."/>
            <person name="Wallender E.K."/>
            <person name="Wong C."/>
            <person name="Yamamura Y."/>
            <person name="Yuan S."/>
            <person name="Shinozaki K."/>
            <person name="Davis R.W."/>
            <person name="Theologis A."/>
            <person name="Ecker J.R."/>
        </authorList>
    </citation>
    <scope>NUCLEOTIDE SEQUENCE [LARGE SCALE MRNA]</scope>
    <source>
        <strain>cv. Columbia</strain>
    </source>
</reference>
<reference key="4">
    <citation type="submission" date="2002-03" db="EMBL/GenBank/DDBJ databases">
        <title>Full-length cDNA from Arabidopsis thaliana.</title>
        <authorList>
            <person name="Brover V.V."/>
            <person name="Troukhan M.E."/>
            <person name="Alexandrov N.A."/>
            <person name="Lu Y.-P."/>
            <person name="Flavell R.B."/>
            <person name="Feldmann K.A."/>
        </authorList>
    </citation>
    <scope>NUCLEOTIDE SEQUENCE [LARGE SCALE MRNA]</scope>
</reference>
<reference key="5">
    <citation type="journal article" date="2015" name="Mol. Cell. Proteomics">
        <title>A novel function for Arabidopsis CYCLASE1 in programmed cell death revealed by isobaric tags for relative and absolute quantitation (iTRAQ) analysis of extracellular matrix proteins.</title>
        <authorList>
            <person name="Smith S.J."/>
            <person name="Kroon J.T."/>
            <person name="Simon W.J."/>
            <person name="Slabas A.R."/>
            <person name="Chivasa S."/>
        </authorList>
    </citation>
    <scope>FUNCTION</scope>
    <scope>DISRUPTION PHENOTYPE</scope>
    <scope>GENE FAMILY</scope>
    <scope>NOMENCLATURE</scope>
</reference>
<protein>
    <recommendedName>
        <fullName evidence="5">Cyclase-like protein 2</fullName>
    </recommendedName>
</protein>
<dbReference type="EMBL" id="AL022604">
    <property type="protein sequence ID" value="CAA18747.1"/>
    <property type="status" value="ALT_SEQ"/>
    <property type="molecule type" value="Genomic_DNA"/>
</dbReference>
<dbReference type="EMBL" id="AL161587">
    <property type="protein sequence ID" value="CAB80239.1"/>
    <property type="status" value="ALT_SEQ"/>
    <property type="molecule type" value="Genomic_DNA"/>
</dbReference>
<dbReference type="EMBL" id="CP002687">
    <property type="protein sequence ID" value="AEE86481.1"/>
    <property type="molecule type" value="Genomic_DNA"/>
</dbReference>
<dbReference type="EMBL" id="AF372956">
    <property type="protein sequence ID" value="AAK50095.1"/>
    <property type="molecule type" value="mRNA"/>
</dbReference>
<dbReference type="EMBL" id="AY074834">
    <property type="protein sequence ID" value="AAL69532.1"/>
    <property type="molecule type" value="mRNA"/>
</dbReference>
<dbReference type="EMBL" id="AY085190">
    <property type="protein sequence ID" value="AAM61741.1"/>
    <property type="molecule type" value="mRNA"/>
</dbReference>
<dbReference type="PIR" id="T06135">
    <property type="entry name" value="T06135"/>
</dbReference>
<dbReference type="RefSeq" id="NP_567979.1">
    <property type="nucleotide sequence ID" value="NM_119688.4"/>
</dbReference>
<dbReference type="SMR" id="Q94JT5"/>
<dbReference type="FunCoup" id="Q94JT5">
    <property type="interactions" value="1186"/>
</dbReference>
<dbReference type="STRING" id="3702.Q94JT5"/>
<dbReference type="PaxDb" id="3702-AT4G35220.1"/>
<dbReference type="ProteomicsDB" id="224690"/>
<dbReference type="EnsemblPlants" id="AT4G35220.1">
    <property type="protein sequence ID" value="AT4G35220.1"/>
    <property type="gene ID" value="AT4G35220"/>
</dbReference>
<dbReference type="GeneID" id="829675"/>
<dbReference type="Gramene" id="AT4G35220.1">
    <property type="protein sequence ID" value="AT4G35220.1"/>
    <property type="gene ID" value="AT4G35220"/>
</dbReference>
<dbReference type="KEGG" id="ath:AT4G35220"/>
<dbReference type="Araport" id="AT4G35220"/>
<dbReference type="TAIR" id="AT4G35220">
    <property type="gene designation" value="CYCLASE2"/>
</dbReference>
<dbReference type="eggNOG" id="ENOG502QRBQ">
    <property type="taxonomic scope" value="Eukaryota"/>
</dbReference>
<dbReference type="HOGENOM" id="CLU_030671_4_1_1"/>
<dbReference type="InParanoid" id="Q94JT5"/>
<dbReference type="OMA" id="FNFEFIY"/>
<dbReference type="OrthoDB" id="7108654at2759"/>
<dbReference type="PhylomeDB" id="Q94JT5"/>
<dbReference type="PRO" id="PR:Q94JT5"/>
<dbReference type="Proteomes" id="UP000006548">
    <property type="component" value="Chromosome 4"/>
</dbReference>
<dbReference type="ExpressionAtlas" id="Q94JT5">
    <property type="expression patterns" value="baseline and differential"/>
</dbReference>
<dbReference type="GO" id="GO:0005783">
    <property type="term" value="C:endoplasmic reticulum"/>
    <property type="evidence" value="ECO:0007005"/>
    <property type="project" value="TAIR"/>
</dbReference>
<dbReference type="GO" id="GO:0005576">
    <property type="term" value="C:extracellular region"/>
    <property type="evidence" value="ECO:0007669"/>
    <property type="project" value="UniProtKB-KW"/>
</dbReference>
<dbReference type="GO" id="GO:0005794">
    <property type="term" value="C:Golgi apparatus"/>
    <property type="evidence" value="ECO:0007005"/>
    <property type="project" value="TAIR"/>
</dbReference>
<dbReference type="GO" id="GO:0005886">
    <property type="term" value="C:plasma membrane"/>
    <property type="evidence" value="ECO:0007005"/>
    <property type="project" value="TAIR"/>
</dbReference>
<dbReference type="GO" id="GO:0099503">
    <property type="term" value="C:secretory vesicle"/>
    <property type="evidence" value="ECO:0007005"/>
    <property type="project" value="TAIR"/>
</dbReference>
<dbReference type="GO" id="GO:0004061">
    <property type="term" value="F:arylformamidase activity"/>
    <property type="evidence" value="ECO:0007669"/>
    <property type="project" value="InterPro"/>
</dbReference>
<dbReference type="GO" id="GO:0019441">
    <property type="term" value="P:L-tryptophan catabolic process to kynurenine"/>
    <property type="evidence" value="ECO:0007669"/>
    <property type="project" value="InterPro"/>
</dbReference>
<dbReference type="FunFam" id="3.50.30.50:FF:000002">
    <property type="entry name" value="Kynurenine formamidase"/>
    <property type="match status" value="1"/>
</dbReference>
<dbReference type="Gene3D" id="3.50.30.50">
    <property type="entry name" value="Putative cyclase"/>
    <property type="match status" value="1"/>
</dbReference>
<dbReference type="InterPro" id="IPR007325">
    <property type="entry name" value="KFase/CYL"/>
</dbReference>
<dbReference type="InterPro" id="IPR037175">
    <property type="entry name" value="KFase_sf"/>
</dbReference>
<dbReference type="PANTHER" id="PTHR31118">
    <property type="entry name" value="CYCLASE-LIKE PROTEIN 2"/>
    <property type="match status" value="1"/>
</dbReference>
<dbReference type="PANTHER" id="PTHR31118:SF12">
    <property type="entry name" value="CYCLASE-LIKE PROTEIN 2"/>
    <property type="match status" value="1"/>
</dbReference>
<dbReference type="Pfam" id="PF04199">
    <property type="entry name" value="Cyclase"/>
    <property type="match status" value="1"/>
</dbReference>
<dbReference type="SUPFAM" id="SSF102198">
    <property type="entry name" value="Putative cyclase"/>
    <property type="match status" value="1"/>
</dbReference>
<feature type="signal peptide" evidence="2">
    <location>
        <begin position="1"/>
        <end position="24"/>
    </location>
</feature>
<feature type="chain" id="PRO_5011950584" description="Cyclase-like protein 2">
    <location>
        <begin position="25"/>
        <end position="272"/>
    </location>
</feature>
<name>CYL2_ARATH</name>
<accession>Q94JT5</accession>
<accession>O65505</accession>
<organism>
    <name type="scientific">Arabidopsis thaliana</name>
    <name type="common">Mouse-ear cress</name>
    <dbReference type="NCBI Taxonomy" id="3702"/>
    <lineage>
        <taxon>Eukaryota</taxon>
        <taxon>Viridiplantae</taxon>
        <taxon>Streptophyta</taxon>
        <taxon>Embryophyta</taxon>
        <taxon>Tracheophyta</taxon>
        <taxon>Spermatophyta</taxon>
        <taxon>Magnoliopsida</taxon>
        <taxon>eudicotyledons</taxon>
        <taxon>Gunneridae</taxon>
        <taxon>Pentapetalae</taxon>
        <taxon>rosids</taxon>
        <taxon>malvids</taxon>
        <taxon>Brassicales</taxon>
        <taxon>Brassicaceae</taxon>
        <taxon>Camelineae</taxon>
        <taxon>Arabidopsis</taxon>
    </lineage>
</organism>
<proteinExistence type="evidence at transcript level"/>
<gene>
    <name evidence="4" type="primary">CYCLASE2</name>
    <name evidence="7" type="ordered locus">At4g35220</name>
    <name evidence="8" type="ORF">F23E12.220</name>
</gene>
<comment type="function">
    <text evidence="6">May function redundantly with CYCLASE1 for normal plant growth, development and viability.</text>
</comment>
<comment type="subcellular location">
    <subcellularLocation>
        <location evidence="1">Secreted</location>
        <location evidence="1">Extracellular space</location>
        <location evidence="1">Extracellular matrix</location>
    </subcellularLocation>
</comment>
<comment type="disruption phenotype">
    <text evidence="3">No visible phenotype under normal growth conditions, but the double mutants cyclase1 and cyclase2 are embryonic lethal.</text>
</comment>
<comment type="similarity">
    <text evidence="5">Belongs to the Cyclase 1 superfamily.</text>
</comment>
<comment type="sequence caution" evidence="5">
    <conflict type="erroneous gene model prediction">
        <sequence resource="EMBL-CDS" id="CAA18747"/>
    </conflict>
</comment>
<comment type="sequence caution" evidence="5">
    <conflict type="erroneous gene model prediction">
        <sequence resource="EMBL-CDS" id="CAB80239"/>
    </conflict>
</comment>
<evidence type="ECO:0000250" key="1">
    <source>
        <dbReference type="UniProtKB" id="Q93V74"/>
    </source>
</evidence>
<evidence type="ECO:0000255" key="2"/>
<evidence type="ECO:0000269" key="3">
    <source>
    </source>
</evidence>
<evidence type="ECO:0000303" key="4">
    <source>
    </source>
</evidence>
<evidence type="ECO:0000305" key="5"/>
<evidence type="ECO:0000305" key="6">
    <source>
    </source>
</evidence>
<evidence type="ECO:0000312" key="7">
    <source>
        <dbReference type="Araport" id="AT4G35220"/>
    </source>
</evidence>
<evidence type="ECO:0000312" key="8">
    <source>
        <dbReference type="EMBL" id="CAA18747.1"/>
    </source>
</evidence>